<dbReference type="EC" id="6.3.5.-" evidence="1"/>
<dbReference type="EMBL" id="CP000509">
    <property type="protein sequence ID" value="ABL82935.1"/>
    <property type="molecule type" value="Genomic_DNA"/>
</dbReference>
<dbReference type="RefSeq" id="WP_011756868.1">
    <property type="nucleotide sequence ID" value="NC_008699.1"/>
</dbReference>
<dbReference type="SMR" id="A1SMA0"/>
<dbReference type="STRING" id="196162.Noca_3435"/>
<dbReference type="KEGG" id="nca:Noca_3435"/>
<dbReference type="eggNOG" id="COG0064">
    <property type="taxonomic scope" value="Bacteria"/>
</dbReference>
<dbReference type="HOGENOM" id="CLU_019240_0_0_11"/>
<dbReference type="OrthoDB" id="9804078at2"/>
<dbReference type="Proteomes" id="UP000000640">
    <property type="component" value="Chromosome"/>
</dbReference>
<dbReference type="GO" id="GO:0050566">
    <property type="term" value="F:asparaginyl-tRNA synthase (glutamine-hydrolyzing) activity"/>
    <property type="evidence" value="ECO:0007669"/>
    <property type="project" value="RHEA"/>
</dbReference>
<dbReference type="GO" id="GO:0005524">
    <property type="term" value="F:ATP binding"/>
    <property type="evidence" value="ECO:0007669"/>
    <property type="project" value="UniProtKB-KW"/>
</dbReference>
<dbReference type="GO" id="GO:0050567">
    <property type="term" value="F:glutaminyl-tRNA synthase (glutamine-hydrolyzing) activity"/>
    <property type="evidence" value="ECO:0007669"/>
    <property type="project" value="UniProtKB-UniRule"/>
</dbReference>
<dbReference type="GO" id="GO:0070681">
    <property type="term" value="P:glutaminyl-tRNAGln biosynthesis via transamidation"/>
    <property type="evidence" value="ECO:0007669"/>
    <property type="project" value="TreeGrafter"/>
</dbReference>
<dbReference type="GO" id="GO:0006412">
    <property type="term" value="P:translation"/>
    <property type="evidence" value="ECO:0007669"/>
    <property type="project" value="UniProtKB-UniRule"/>
</dbReference>
<dbReference type="FunFam" id="1.10.10.410:FF:000002">
    <property type="entry name" value="Aspartyl/glutamyl-tRNA(Asn/Gln) amidotransferase subunit B"/>
    <property type="match status" value="1"/>
</dbReference>
<dbReference type="Gene3D" id="1.10.10.410">
    <property type="match status" value="1"/>
</dbReference>
<dbReference type="HAMAP" id="MF_00121">
    <property type="entry name" value="GatB"/>
    <property type="match status" value="1"/>
</dbReference>
<dbReference type="InterPro" id="IPR017959">
    <property type="entry name" value="Asn/Gln-tRNA_amidoTrfase_suB/E"/>
</dbReference>
<dbReference type="InterPro" id="IPR006075">
    <property type="entry name" value="Asn/Gln-tRNA_Trfase_suB/E_cat"/>
</dbReference>
<dbReference type="InterPro" id="IPR018027">
    <property type="entry name" value="Asn/Gln_amidotransferase"/>
</dbReference>
<dbReference type="InterPro" id="IPR003789">
    <property type="entry name" value="Asn/Gln_tRNA_amidoTrase-B-like"/>
</dbReference>
<dbReference type="InterPro" id="IPR004413">
    <property type="entry name" value="GatB"/>
</dbReference>
<dbReference type="InterPro" id="IPR023168">
    <property type="entry name" value="GatB_Yqey_C_2"/>
</dbReference>
<dbReference type="InterPro" id="IPR017958">
    <property type="entry name" value="Gln-tRNA_amidoTrfase_suB_CS"/>
</dbReference>
<dbReference type="InterPro" id="IPR014746">
    <property type="entry name" value="Gln_synth/guanido_kin_cat_dom"/>
</dbReference>
<dbReference type="NCBIfam" id="TIGR00133">
    <property type="entry name" value="gatB"/>
    <property type="match status" value="1"/>
</dbReference>
<dbReference type="NCBIfam" id="NF004012">
    <property type="entry name" value="PRK05477.1-2"/>
    <property type="match status" value="1"/>
</dbReference>
<dbReference type="NCBIfam" id="NF004013">
    <property type="entry name" value="PRK05477.1-3"/>
    <property type="match status" value="1"/>
</dbReference>
<dbReference type="NCBIfam" id="NF004014">
    <property type="entry name" value="PRK05477.1-4"/>
    <property type="match status" value="1"/>
</dbReference>
<dbReference type="PANTHER" id="PTHR11659">
    <property type="entry name" value="GLUTAMYL-TRNA GLN AMIDOTRANSFERASE SUBUNIT B MITOCHONDRIAL AND PROKARYOTIC PET112-RELATED"/>
    <property type="match status" value="1"/>
</dbReference>
<dbReference type="PANTHER" id="PTHR11659:SF0">
    <property type="entry name" value="GLUTAMYL-TRNA(GLN) AMIDOTRANSFERASE SUBUNIT B, MITOCHONDRIAL"/>
    <property type="match status" value="1"/>
</dbReference>
<dbReference type="Pfam" id="PF02934">
    <property type="entry name" value="GatB_N"/>
    <property type="match status" value="1"/>
</dbReference>
<dbReference type="Pfam" id="PF02637">
    <property type="entry name" value="GatB_Yqey"/>
    <property type="match status" value="1"/>
</dbReference>
<dbReference type="SMART" id="SM00845">
    <property type="entry name" value="GatB_Yqey"/>
    <property type="match status" value="1"/>
</dbReference>
<dbReference type="SUPFAM" id="SSF89095">
    <property type="entry name" value="GatB/YqeY motif"/>
    <property type="match status" value="1"/>
</dbReference>
<dbReference type="SUPFAM" id="SSF55931">
    <property type="entry name" value="Glutamine synthetase/guanido kinase"/>
    <property type="match status" value="1"/>
</dbReference>
<dbReference type="PROSITE" id="PS01234">
    <property type="entry name" value="GATB"/>
    <property type="match status" value="1"/>
</dbReference>
<name>GATB_NOCSJ</name>
<keyword id="KW-0067">ATP-binding</keyword>
<keyword id="KW-0436">Ligase</keyword>
<keyword id="KW-0547">Nucleotide-binding</keyword>
<keyword id="KW-0648">Protein biosynthesis</keyword>
<keyword id="KW-1185">Reference proteome</keyword>
<proteinExistence type="inferred from homology"/>
<gene>
    <name evidence="1" type="primary">gatB</name>
    <name type="ordered locus">Noca_3435</name>
</gene>
<evidence type="ECO:0000255" key="1">
    <source>
        <dbReference type="HAMAP-Rule" id="MF_00121"/>
    </source>
</evidence>
<comment type="function">
    <text evidence="1">Allows the formation of correctly charged Asn-tRNA(Asn) or Gln-tRNA(Gln) through the transamidation of misacylated Asp-tRNA(Asn) or Glu-tRNA(Gln) in organisms which lack either or both of asparaginyl-tRNA or glutaminyl-tRNA synthetases. The reaction takes place in the presence of glutamine and ATP through an activated phospho-Asp-tRNA(Asn) or phospho-Glu-tRNA(Gln).</text>
</comment>
<comment type="catalytic activity">
    <reaction evidence="1">
        <text>L-glutamyl-tRNA(Gln) + L-glutamine + ATP + H2O = L-glutaminyl-tRNA(Gln) + L-glutamate + ADP + phosphate + H(+)</text>
        <dbReference type="Rhea" id="RHEA:17521"/>
        <dbReference type="Rhea" id="RHEA-COMP:9681"/>
        <dbReference type="Rhea" id="RHEA-COMP:9684"/>
        <dbReference type="ChEBI" id="CHEBI:15377"/>
        <dbReference type="ChEBI" id="CHEBI:15378"/>
        <dbReference type="ChEBI" id="CHEBI:29985"/>
        <dbReference type="ChEBI" id="CHEBI:30616"/>
        <dbReference type="ChEBI" id="CHEBI:43474"/>
        <dbReference type="ChEBI" id="CHEBI:58359"/>
        <dbReference type="ChEBI" id="CHEBI:78520"/>
        <dbReference type="ChEBI" id="CHEBI:78521"/>
        <dbReference type="ChEBI" id="CHEBI:456216"/>
    </reaction>
</comment>
<comment type="catalytic activity">
    <reaction evidence="1">
        <text>L-aspartyl-tRNA(Asn) + L-glutamine + ATP + H2O = L-asparaginyl-tRNA(Asn) + L-glutamate + ADP + phosphate + 2 H(+)</text>
        <dbReference type="Rhea" id="RHEA:14513"/>
        <dbReference type="Rhea" id="RHEA-COMP:9674"/>
        <dbReference type="Rhea" id="RHEA-COMP:9677"/>
        <dbReference type="ChEBI" id="CHEBI:15377"/>
        <dbReference type="ChEBI" id="CHEBI:15378"/>
        <dbReference type="ChEBI" id="CHEBI:29985"/>
        <dbReference type="ChEBI" id="CHEBI:30616"/>
        <dbReference type="ChEBI" id="CHEBI:43474"/>
        <dbReference type="ChEBI" id="CHEBI:58359"/>
        <dbReference type="ChEBI" id="CHEBI:78515"/>
        <dbReference type="ChEBI" id="CHEBI:78516"/>
        <dbReference type="ChEBI" id="CHEBI:456216"/>
    </reaction>
</comment>
<comment type="subunit">
    <text evidence="1">Heterotrimer of A, B and C subunits.</text>
</comment>
<comment type="similarity">
    <text evidence="1">Belongs to the GatB/GatE family. GatB subfamily.</text>
</comment>
<feature type="chain" id="PRO_1000016010" description="Aspartyl/glutamyl-tRNA(Asn/Gln) amidotransferase subunit B">
    <location>
        <begin position="1"/>
        <end position="497"/>
    </location>
</feature>
<sequence length="497" mass="53595">MTETLVAFDDVLASYDPAMGLEVHVELNTASKMFCGCPTEFGAEPNTQVCPTCLGLPGAMPVVNGKAVESAIRIGLALNCEIAEWCRFARKNYFYPDMPKNFQTSQYDEPICFEGYMDVDVDGETFRVEIERAHMEEDTGKSLHVGGATGRIHGADHSLVDYNRAGIPLIEIVTKPIVGAGAKAPEVARAYVAQLRDLIIALGVSDARMDQGSIRADVNLSLSPKDSGTLGTRTETKNVNSLRSVERAVRYEMSRHAGVLDAGRPILQETRHWHEDTGVTTSGREKSDAEDYRYFPEPDLVPVAPTRAWVEELRGTLPENPTQKRARLQAEWGFSDLEMRDTVGAGALLIVEETIAAGASPQAARKWWLGEMARRANEAGVEVGELGVTPVDVARVQVLVDEGKLNDKLARQVFDGLLAGEGSPDEIVAARGLAIVSDEGALSAAVDSAIAANPDVADKIRDGKVAAAGALIGAVMKEMRGQADAARVRELILEKLA</sequence>
<accession>A1SMA0</accession>
<reference key="1">
    <citation type="submission" date="2006-12" db="EMBL/GenBank/DDBJ databases">
        <title>Complete sequence of chromosome 1 of Nocardioides sp. JS614.</title>
        <authorList>
            <person name="Copeland A."/>
            <person name="Lucas S."/>
            <person name="Lapidus A."/>
            <person name="Barry K."/>
            <person name="Detter J.C."/>
            <person name="Glavina del Rio T."/>
            <person name="Hammon N."/>
            <person name="Israni S."/>
            <person name="Dalin E."/>
            <person name="Tice H."/>
            <person name="Pitluck S."/>
            <person name="Thompson L.S."/>
            <person name="Brettin T."/>
            <person name="Bruce D."/>
            <person name="Han C."/>
            <person name="Tapia R."/>
            <person name="Schmutz J."/>
            <person name="Larimer F."/>
            <person name="Land M."/>
            <person name="Hauser L."/>
            <person name="Kyrpides N."/>
            <person name="Kim E."/>
            <person name="Mattes T."/>
            <person name="Gossett J."/>
            <person name="Richardson P."/>
        </authorList>
    </citation>
    <scope>NUCLEOTIDE SEQUENCE [LARGE SCALE GENOMIC DNA]</scope>
    <source>
        <strain>ATCC BAA-499 / JS614</strain>
    </source>
</reference>
<protein>
    <recommendedName>
        <fullName evidence="1">Aspartyl/glutamyl-tRNA(Asn/Gln) amidotransferase subunit B</fullName>
        <shortName evidence="1">Asp/Glu-ADT subunit B</shortName>
        <ecNumber evidence="1">6.3.5.-</ecNumber>
    </recommendedName>
</protein>
<organism>
    <name type="scientific">Nocardioides sp. (strain ATCC BAA-499 / JS614)</name>
    <dbReference type="NCBI Taxonomy" id="196162"/>
    <lineage>
        <taxon>Bacteria</taxon>
        <taxon>Bacillati</taxon>
        <taxon>Actinomycetota</taxon>
        <taxon>Actinomycetes</taxon>
        <taxon>Propionibacteriales</taxon>
        <taxon>Nocardioidaceae</taxon>
        <taxon>Nocardioides</taxon>
    </lineage>
</organism>